<keyword id="KW-1185">Reference proteome</keyword>
<accession>A4ZUE0</accession>
<organismHost>
    <name type="scientific">Acidianus convivator</name>
    <dbReference type="NCBI Taxonomy" id="269667"/>
</organismHost>
<proteinExistence type="predicted"/>
<feature type="chain" id="PRO_0000384854" description="Uncharacterized protein OR117">
    <location>
        <begin position="1"/>
        <end position="117"/>
    </location>
</feature>
<sequence length="117" mass="14196">MSESKRKYYLPYEVRQXFDAVAGRIKYMICQFEHEHVTGPYDAVILFDGLLLRLKDLAENDFIDERIEQVKNVYYQVGKFSDNIVWNYEVHRYYHPDEIVDFIEVIYDSLKKIYEIE</sequence>
<protein>
    <recommendedName>
        <fullName>Uncharacterized protein OR117</fullName>
    </recommendedName>
</protein>
<gene>
    <name type="ORF">OR117</name>
</gene>
<organism>
    <name type="scientific">Acidianus bottle-shaped virus (isolate Italy/Pozzuoli)</name>
    <name type="common">ABV</name>
    <dbReference type="NCBI Taxonomy" id="654911"/>
    <lineage>
        <taxon>Viruses</taxon>
        <taxon>Viruses incertae sedis</taxon>
        <taxon>Ampullaviridae</taxon>
        <taxon>Bottigliavirus</taxon>
        <taxon>Bottigliavirus ABV</taxon>
    </lineage>
</organism>
<name>Y117_ABVP</name>
<reference key="1">
    <citation type="journal article" date="2007" name="Virology">
        <title>Genome of the Acidianus bottle-shaped virus and insights into the replication and packaging mechanisms.</title>
        <authorList>
            <person name="Peng X."/>
            <person name="Basta T."/>
            <person name="Haring M."/>
            <person name="Garrett R.A."/>
            <person name="Prangishvili D."/>
        </authorList>
    </citation>
    <scope>NUCLEOTIDE SEQUENCE [GENOMIC DNA]</scope>
</reference>
<dbReference type="EMBL" id="EF432053">
    <property type="protein sequence ID" value="ABP73444.1"/>
    <property type="molecule type" value="Genomic_DNA"/>
</dbReference>
<dbReference type="RefSeq" id="YP_001210358.1">
    <property type="nucleotide sequence ID" value="NC_009452.1"/>
</dbReference>
<dbReference type="GeneID" id="5129818"/>
<dbReference type="KEGG" id="vg:5129818"/>
<dbReference type="Proteomes" id="UP000000513">
    <property type="component" value="Segment"/>
</dbReference>